<dbReference type="EMBL" id="CR380956">
    <property type="protein sequence ID" value="CAG60763.1"/>
    <property type="molecule type" value="Genomic_DNA"/>
</dbReference>
<dbReference type="RefSeq" id="XP_447814.1">
    <property type="nucleotide sequence ID" value="XM_447814.1"/>
</dbReference>
<dbReference type="PDB" id="7O9Q">
    <property type="method" value="X-ray"/>
    <property type="resolution" value="1.85 A"/>
    <property type="chains" value="A=18-324"/>
</dbReference>
<dbReference type="PDBsum" id="7O9Q"/>
<dbReference type="SMR" id="Q6FPN0"/>
<dbReference type="STRING" id="284593.Q6FPN0"/>
<dbReference type="GlyCosmos" id="Q6FPN0">
    <property type="glycosylation" value="2 sites, No reported glycans"/>
</dbReference>
<dbReference type="EnsemblFungi" id="CAGL0J02508g-T">
    <property type="protein sequence ID" value="CAGL0J02508g-T-p1"/>
    <property type="gene ID" value="CAGL0J02508g"/>
</dbReference>
<dbReference type="GeneID" id="2889767"/>
<dbReference type="KEGG" id="cgr:2889767"/>
<dbReference type="CGD" id="CAL0133080">
    <property type="gene designation" value="AWP1"/>
</dbReference>
<dbReference type="VEuPathDB" id="FungiDB:CAGL0J02508g"/>
<dbReference type="eggNOG" id="KOG3544">
    <property type="taxonomic scope" value="Eukaryota"/>
</dbReference>
<dbReference type="HOGENOM" id="CLU_369178_0_0_1"/>
<dbReference type="InParanoid" id="Q6FPN0"/>
<dbReference type="OMA" id="GLXRRDD"/>
<dbReference type="Proteomes" id="UP000002428">
    <property type="component" value="Chromosome J"/>
</dbReference>
<dbReference type="GO" id="GO:0031012">
    <property type="term" value="C:extracellular matrix"/>
    <property type="evidence" value="ECO:0007669"/>
    <property type="project" value="TreeGrafter"/>
</dbReference>
<dbReference type="GO" id="GO:0005576">
    <property type="term" value="C:extracellular region"/>
    <property type="evidence" value="ECO:0007669"/>
    <property type="project" value="UniProtKB-KW"/>
</dbReference>
<dbReference type="GO" id="GO:0009277">
    <property type="term" value="C:fungal-type cell wall"/>
    <property type="evidence" value="ECO:0000314"/>
    <property type="project" value="CGD"/>
</dbReference>
<dbReference type="GO" id="GO:0098631">
    <property type="term" value="F:cell adhesion mediator activity"/>
    <property type="evidence" value="ECO:0000250"/>
    <property type="project" value="UniProtKB"/>
</dbReference>
<dbReference type="GO" id="GO:0030020">
    <property type="term" value="F:extracellular matrix structural constituent conferring tensile strength"/>
    <property type="evidence" value="ECO:0007669"/>
    <property type="project" value="TreeGrafter"/>
</dbReference>
<dbReference type="GO" id="GO:0007155">
    <property type="term" value="P:cell adhesion"/>
    <property type="evidence" value="ECO:0000250"/>
    <property type="project" value="UniProtKB"/>
</dbReference>
<dbReference type="GO" id="GO:0030198">
    <property type="term" value="P:extracellular matrix organization"/>
    <property type="evidence" value="ECO:0007669"/>
    <property type="project" value="TreeGrafter"/>
</dbReference>
<dbReference type="Gene3D" id="2.160.10.10">
    <property type="entry name" value="Hexapeptide repeat proteins"/>
    <property type="match status" value="1"/>
</dbReference>
<dbReference type="InterPro" id="IPR050149">
    <property type="entry name" value="Collagen_superfamily"/>
</dbReference>
<dbReference type="InterPro" id="IPR011004">
    <property type="entry name" value="Trimer_LpxA-like_sf"/>
</dbReference>
<dbReference type="PANTHER" id="PTHR24023:SF1112">
    <property type="entry name" value="COL_CUTICLE_N DOMAIN-CONTAINING PROTEIN-RELATED"/>
    <property type="match status" value="1"/>
</dbReference>
<dbReference type="PANTHER" id="PTHR24023">
    <property type="entry name" value="COLLAGEN ALPHA"/>
    <property type="match status" value="1"/>
</dbReference>
<dbReference type="SUPFAM" id="SSF51161">
    <property type="entry name" value="Trimeric LpxA-like enzymes"/>
    <property type="match status" value="1"/>
</dbReference>
<organism evidence="10">
    <name type="scientific">Candida glabrata (strain ATCC 2001 / BCRC 20586 / JCM 3761 / NBRC 0622 / NRRL Y-65 / CBS 138)</name>
    <name type="common">Yeast</name>
    <name type="synonym">Nakaseomyces glabratus</name>
    <dbReference type="NCBI Taxonomy" id="284593"/>
    <lineage>
        <taxon>Eukaryota</taxon>
        <taxon>Fungi</taxon>
        <taxon>Dikarya</taxon>
        <taxon>Ascomycota</taxon>
        <taxon>Saccharomycotina</taxon>
        <taxon>Saccharomycetes</taxon>
        <taxon>Saccharomycetales</taxon>
        <taxon>Saccharomycetaceae</taxon>
        <taxon>Nakaseomyces</taxon>
    </lineage>
</organism>
<reference evidence="10" key="1">
    <citation type="journal article" date="2004" name="Nature">
        <title>Genome evolution in yeasts.</title>
        <authorList>
            <person name="Dujon B."/>
            <person name="Sherman D."/>
            <person name="Fischer G."/>
            <person name="Durrens P."/>
            <person name="Casaregola S."/>
            <person name="Lafontaine I."/>
            <person name="de Montigny J."/>
            <person name="Marck C."/>
            <person name="Neuveglise C."/>
            <person name="Talla E."/>
            <person name="Goffard N."/>
            <person name="Frangeul L."/>
            <person name="Aigle M."/>
            <person name="Anthouard V."/>
            <person name="Babour A."/>
            <person name="Barbe V."/>
            <person name="Barnay S."/>
            <person name="Blanchin S."/>
            <person name="Beckerich J.-M."/>
            <person name="Beyne E."/>
            <person name="Bleykasten C."/>
            <person name="Boisrame A."/>
            <person name="Boyer J."/>
            <person name="Cattolico L."/>
            <person name="Confanioleri F."/>
            <person name="de Daruvar A."/>
            <person name="Despons L."/>
            <person name="Fabre E."/>
            <person name="Fairhead C."/>
            <person name="Ferry-Dumazet H."/>
            <person name="Groppi A."/>
            <person name="Hantraye F."/>
            <person name="Hennequin C."/>
            <person name="Jauniaux N."/>
            <person name="Joyet P."/>
            <person name="Kachouri R."/>
            <person name="Kerrest A."/>
            <person name="Koszul R."/>
            <person name="Lemaire M."/>
            <person name="Lesur I."/>
            <person name="Ma L."/>
            <person name="Muller H."/>
            <person name="Nicaud J.-M."/>
            <person name="Nikolski M."/>
            <person name="Oztas S."/>
            <person name="Ozier-Kalogeropoulos O."/>
            <person name="Pellenz S."/>
            <person name="Potier S."/>
            <person name="Richard G.-F."/>
            <person name="Straub M.-L."/>
            <person name="Suleau A."/>
            <person name="Swennen D."/>
            <person name="Tekaia F."/>
            <person name="Wesolowski-Louvel M."/>
            <person name="Westhof E."/>
            <person name="Wirth B."/>
            <person name="Zeniou-Meyer M."/>
            <person name="Zivanovic Y."/>
            <person name="Bolotin-Fukuhara M."/>
            <person name="Thierry A."/>
            <person name="Bouchier C."/>
            <person name="Caudron B."/>
            <person name="Scarpelli C."/>
            <person name="Gaillardin C."/>
            <person name="Weissenbach J."/>
            <person name="Wincker P."/>
            <person name="Souciet J.-L."/>
        </authorList>
    </citation>
    <scope>NUCLEOTIDE SEQUENCE [LARGE SCALE GENOMIC DNA]</scope>
    <source>
        <strain>ATCC 2001 / BCRC 20586 / JCM 3761 / NBRC 0622 / NRRL Y-65 / CBS 138</strain>
    </source>
</reference>
<reference evidence="8" key="2">
    <citation type="journal article" date="2011" name="Mycopathologia">
        <title>Identification and differential gene expression of adhesin-like wall proteins in Candida glabrata biofilms.</title>
        <authorList>
            <person name="Kraneveld E.A."/>
            <person name="de Soet J.J."/>
            <person name="Deng D.M."/>
            <person name="Dekker H.L."/>
            <person name="de Koster C.G."/>
            <person name="Klis F.M."/>
            <person name="Crielaard W."/>
            <person name="de Groot P.W."/>
        </authorList>
    </citation>
    <scope>INDUCTION</scope>
</reference>
<reference evidence="11" key="3">
    <citation type="journal article" date="2021" name="PLoS Pathog.">
        <title>A novel class of Candida glabrata cell wall proteins with beta-helix fold mediates adhesion in clinical isolates.</title>
        <authorList>
            <person name="Reithofer V."/>
            <person name="Fernandez-Pereira J."/>
            <person name="Alvarado M."/>
            <person name="de Groot P."/>
            <person name="Essen L.O."/>
        </authorList>
    </citation>
    <scope>X-RAY CRYSTALLOGRAPHY (1.85 ANGSTROMS) OF 18-324</scope>
    <scope>DISULFIDE BOND</scope>
</reference>
<keyword id="KW-0002">3D-structure</keyword>
<keyword id="KW-0130">Cell adhesion</keyword>
<keyword id="KW-0134">Cell wall</keyword>
<keyword id="KW-1015">Disulfide bond</keyword>
<keyword id="KW-0325">Glycoprotein</keyword>
<keyword id="KW-1185">Reference proteome</keyword>
<keyword id="KW-0964">Secreted</keyword>
<keyword id="KW-0732">Signal</keyword>
<protein>
    <recommendedName>
        <fullName evidence="7">Adhesin AWP1</fullName>
    </recommendedName>
</protein>
<evidence type="ECO:0000250" key="1">
    <source>
        <dbReference type="UniProtKB" id="Q6FNG1"/>
    </source>
</evidence>
<evidence type="ECO:0000255" key="2"/>
<evidence type="ECO:0000255" key="3">
    <source>
        <dbReference type="PROSITE-ProRule" id="PRU00498"/>
    </source>
</evidence>
<evidence type="ECO:0000256" key="4">
    <source>
        <dbReference type="SAM" id="MobiDB-lite"/>
    </source>
</evidence>
<evidence type="ECO:0000269" key="5">
    <source>
    </source>
</evidence>
<evidence type="ECO:0000269" key="6">
    <source>
    </source>
</evidence>
<evidence type="ECO:0000303" key="7">
    <source>
    </source>
</evidence>
<evidence type="ECO:0000305" key="8"/>
<evidence type="ECO:0000312" key="9">
    <source>
        <dbReference type="CGD" id="CAL0133080"/>
    </source>
</evidence>
<evidence type="ECO:0000312" key="10">
    <source>
        <dbReference type="Proteomes" id="UP000002428"/>
    </source>
</evidence>
<evidence type="ECO:0007744" key="11">
    <source>
        <dbReference type="PDB" id="7O9Q"/>
    </source>
</evidence>
<evidence type="ECO:0007829" key="12">
    <source>
        <dbReference type="PDB" id="7O9Q"/>
    </source>
</evidence>
<proteinExistence type="evidence at protein level"/>
<sequence>MSLITIFAFFIKATLVLSLDILTPTTLTGDQTFNEDVSVVSSLTLNDGSQYLFNNLLQIAPSSASVTANALAAVSVFTFSLPPSSSLSNSGTLIISNSNTGPSTEQHIVITPNVMANTGTITLSLAHTNTDSSSTLIIDPVTFYNTGTINYESIGSETNDPSLTGNILSIGSSGRTLQNLGTINLNAANSYYLLGTITENSGSINVQKGFLYVNALDFIGNTINLSTTTALAFISPVSQVVRVRGVFFGNIIASVGSSGTFSYNTQTGILTVTTNGVYSYDIGCGYNPALMSGQQETLSFQGNLYDTFLVLVNQPIPSDLTCAAVSSSITPSSSVEPSSSVEPSSSVEPSSSVEPSSSVEPSSSVEPSSSVEPSSSVEPSSSVEPSSSVEPSSSVEPSSSVEPSSSVEPSSSVEPSSSVEPSSSVEPSSSVEPSSSVEPSSSVEPSSSVEPSSPAVPSSSAEPSSSVVPPITPIPSSSVVSASVFDTSSTLPSSPTVPTSSVSPSSPTVPTSSVSPSSPTVPTSSESPSTLSTPSSSAAPSSFCPTCVSSGTPPAPSSSAVVPTSSAGGGNGGDNGQPGADGQPGAAGQPGAAGQPGAAGQPGAAGQPGAAGQPGAAGQPGAAGQPGAAGQPGAAGQPGAAGQPGAGSGGGSEQPTPGAGAGSGSADGNQSGTSSGTGNGQAGSGQAGSGQVGSGQAGAGQAGSGQAGAGQAGSGQAGAGQAGLDNTASGQSEGGQASAMDGDQSGRGGQSNSGSLLQPNAQQGTGSGTGSDTGADQASGESPGQIGDAQPGSGTDQSSGRHSLAAEARTSQSHSLAADARTRSTTRQTSVIAPGTAPGTAVVTTFHGCGTVNHKGMINILLALALLVLL</sequence>
<gene>
    <name evidence="9" type="primary">AWP1</name>
    <name evidence="9" type="ordered locus">CAGL0J02508g</name>
</gene>
<comment type="function">
    <text evidence="1">May play a role in cell adhesion.</text>
</comment>
<comment type="subcellular location">
    <subcellularLocation>
        <location evidence="1">Secreted</location>
        <location evidence="1">Cell wall</location>
    </subcellularLocation>
    <text evidence="1">May be GPI-anchored.</text>
</comment>
<comment type="induction">
    <text evidence="5">Induced during biofilm formation.</text>
</comment>
<name>AWP1_CANGA</name>
<accession>Q6FPN0</accession>
<feature type="signal peptide" evidence="2">
    <location>
        <begin position="1"/>
        <end position="18"/>
    </location>
</feature>
<feature type="chain" id="PRO_5004274134" description="Adhesin AWP1" evidence="2">
    <location>
        <begin position="19"/>
        <end position="870"/>
    </location>
</feature>
<feature type="region of interest" description="Disordered" evidence="4">
    <location>
        <begin position="329"/>
        <end position="835"/>
    </location>
</feature>
<feature type="compositionally biased region" description="Low complexity" evidence="4">
    <location>
        <begin position="331"/>
        <end position="566"/>
    </location>
</feature>
<feature type="compositionally biased region" description="Gly residues" evidence="4">
    <location>
        <begin position="567"/>
        <end position="576"/>
    </location>
</feature>
<feature type="compositionally biased region" description="Low complexity" evidence="4">
    <location>
        <begin position="577"/>
        <end position="641"/>
    </location>
</feature>
<feature type="compositionally biased region" description="Gly residues" evidence="4">
    <location>
        <begin position="642"/>
        <end position="652"/>
    </location>
</feature>
<feature type="compositionally biased region" description="Gly residues" evidence="4">
    <location>
        <begin position="675"/>
        <end position="721"/>
    </location>
</feature>
<feature type="compositionally biased region" description="Polar residues" evidence="4">
    <location>
        <begin position="724"/>
        <end position="735"/>
    </location>
</feature>
<feature type="compositionally biased region" description="Polar residues" evidence="4">
    <location>
        <begin position="792"/>
        <end position="801"/>
    </location>
</feature>
<feature type="glycosylation site" description="N-linked (GlcNAc...) asparagine" evidence="3">
    <location>
        <position position="224"/>
    </location>
</feature>
<feature type="glycosylation site" description="N-linked (GlcNAc...) asparagine" evidence="3">
    <location>
        <position position="669"/>
    </location>
</feature>
<feature type="disulfide bond" evidence="6 11">
    <location>
        <begin position="284"/>
        <end position="322"/>
    </location>
</feature>
<feature type="strand" evidence="12">
    <location>
        <begin position="19"/>
        <end position="21"/>
    </location>
</feature>
<feature type="strand" evidence="12">
    <location>
        <begin position="25"/>
        <end position="29"/>
    </location>
</feature>
<feature type="strand" evidence="12">
    <location>
        <begin position="31"/>
        <end position="33"/>
    </location>
</feature>
<feature type="strand" evidence="12">
    <location>
        <begin position="37"/>
        <end position="53"/>
    </location>
</feature>
<feature type="strand" evidence="12">
    <location>
        <begin position="55"/>
        <end position="59"/>
    </location>
</feature>
<feature type="strand" evidence="12">
    <location>
        <begin position="65"/>
        <end position="70"/>
    </location>
</feature>
<feature type="strand" evidence="12">
    <location>
        <begin position="75"/>
        <end position="81"/>
    </location>
</feature>
<feature type="strand" evidence="12">
    <location>
        <begin position="86"/>
        <end position="97"/>
    </location>
</feature>
<feature type="strand" evidence="12">
    <location>
        <begin position="105"/>
        <end position="110"/>
    </location>
</feature>
<feature type="strand" evidence="12">
    <location>
        <begin position="113"/>
        <end position="126"/>
    </location>
</feature>
<feature type="strand" evidence="12">
    <location>
        <begin position="131"/>
        <end position="133"/>
    </location>
</feature>
<feature type="strand" evidence="12">
    <location>
        <begin position="135"/>
        <end position="138"/>
    </location>
</feature>
<feature type="strand" evidence="12">
    <location>
        <begin position="141"/>
        <end position="153"/>
    </location>
</feature>
<feature type="strand" evidence="12">
    <location>
        <begin position="164"/>
        <end position="166"/>
    </location>
</feature>
<feature type="strand" evidence="12">
    <location>
        <begin position="168"/>
        <end position="170"/>
    </location>
</feature>
<feature type="strand" evidence="12">
    <location>
        <begin position="176"/>
        <end position="193"/>
    </location>
</feature>
<feature type="strand" evidence="12">
    <location>
        <begin position="195"/>
        <end position="198"/>
    </location>
</feature>
<feature type="strand" evidence="12">
    <location>
        <begin position="203"/>
        <end position="206"/>
    </location>
</feature>
<feature type="strand" evidence="12">
    <location>
        <begin position="208"/>
        <end position="213"/>
    </location>
</feature>
<feature type="strand" evidence="12">
    <location>
        <begin position="222"/>
        <end position="225"/>
    </location>
</feature>
<feature type="strand" evidence="12">
    <location>
        <begin position="229"/>
        <end position="235"/>
    </location>
</feature>
<feature type="strand" evidence="12">
    <location>
        <begin position="241"/>
        <end position="244"/>
    </location>
</feature>
<feature type="strand" evidence="12">
    <location>
        <begin position="251"/>
        <end position="255"/>
    </location>
</feature>
<feature type="strand" evidence="12">
    <location>
        <begin position="260"/>
        <end position="264"/>
    </location>
</feature>
<feature type="turn" evidence="12">
    <location>
        <begin position="265"/>
        <end position="268"/>
    </location>
</feature>
<feature type="strand" evidence="12">
    <location>
        <begin position="269"/>
        <end position="281"/>
    </location>
</feature>
<feature type="helix" evidence="12">
    <location>
        <begin position="288"/>
        <end position="290"/>
    </location>
</feature>
<feature type="strand" evidence="12">
    <location>
        <begin position="292"/>
        <end position="300"/>
    </location>
</feature>
<feature type="strand" evidence="12">
    <location>
        <begin position="303"/>
        <end position="311"/>
    </location>
</feature>